<dbReference type="EMBL" id="AE017126">
    <property type="protein sequence ID" value="AAQ00707.1"/>
    <property type="molecule type" value="Genomic_DNA"/>
</dbReference>
<dbReference type="RefSeq" id="NP_876054.1">
    <property type="nucleotide sequence ID" value="NC_005042.1"/>
</dbReference>
<dbReference type="RefSeq" id="WP_006042265.1">
    <property type="nucleotide sequence ID" value="NC_005042.1"/>
</dbReference>
<dbReference type="SMR" id="Q7VA06"/>
<dbReference type="STRING" id="167539.Pro_1663"/>
<dbReference type="EnsemblBacteria" id="AAQ00707">
    <property type="protein sequence ID" value="AAQ00707"/>
    <property type="gene ID" value="Pro_1663"/>
</dbReference>
<dbReference type="KEGG" id="pma:Pro_1663"/>
<dbReference type="PATRIC" id="fig|167539.5.peg.1756"/>
<dbReference type="eggNOG" id="COG0051">
    <property type="taxonomic scope" value="Bacteria"/>
</dbReference>
<dbReference type="HOGENOM" id="CLU_122625_1_3_3"/>
<dbReference type="OrthoDB" id="9804464at2"/>
<dbReference type="Proteomes" id="UP000001420">
    <property type="component" value="Chromosome"/>
</dbReference>
<dbReference type="GO" id="GO:1990904">
    <property type="term" value="C:ribonucleoprotein complex"/>
    <property type="evidence" value="ECO:0007669"/>
    <property type="project" value="UniProtKB-KW"/>
</dbReference>
<dbReference type="GO" id="GO:0005840">
    <property type="term" value="C:ribosome"/>
    <property type="evidence" value="ECO:0007669"/>
    <property type="project" value="UniProtKB-KW"/>
</dbReference>
<dbReference type="GO" id="GO:0003735">
    <property type="term" value="F:structural constituent of ribosome"/>
    <property type="evidence" value="ECO:0007669"/>
    <property type="project" value="InterPro"/>
</dbReference>
<dbReference type="GO" id="GO:0000049">
    <property type="term" value="F:tRNA binding"/>
    <property type="evidence" value="ECO:0007669"/>
    <property type="project" value="UniProtKB-UniRule"/>
</dbReference>
<dbReference type="GO" id="GO:0006412">
    <property type="term" value="P:translation"/>
    <property type="evidence" value="ECO:0007669"/>
    <property type="project" value="UniProtKB-UniRule"/>
</dbReference>
<dbReference type="FunFam" id="3.30.70.600:FF:000001">
    <property type="entry name" value="30S ribosomal protein S10"/>
    <property type="match status" value="1"/>
</dbReference>
<dbReference type="Gene3D" id="3.30.70.600">
    <property type="entry name" value="Ribosomal protein S10 domain"/>
    <property type="match status" value="1"/>
</dbReference>
<dbReference type="HAMAP" id="MF_00508">
    <property type="entry name" value="Ribosomal_uS10"/>
    <property type="match status" value="1"/>
</dbReference>
<dbReference type="InterPro" id="IPR001848">
    <property type="entry name" value="Ribosomal_uS10"/>
</dbReference>
<dbReference type="InterPro" id="IPR027486">
    <property type="entry name" value="Ribosomal_uS10_dom"/>
</dbReference>
<dbReference type="InterPro" id="IPR036838">
    <property type="entry name" value="Ribosomal_uS10_dom_sf"/>
</dbReference>
<dbReference type="NCBIfam" id="NF001861">
    <property type="entry name" value="PRK00596.1"/>
    <property type="match status" value="1"/>
</dbReference>
<dbReference type="NCBIfam" id="TIGR01049">
    <property type="entry name" value="rpsJ_bact"/>
    <property type="match status" value="1"/>
</dbReference>
<dbReference type="PANTHER" id="PTHR11700">
    <property type="entry name" value="30S RIBOSOMAL PROTEIN S10 FAMILY MEMBER"/>
    <property type="match status" value="1"/>
</dbReference>
<dbReference type="Pfam" id="PF00338">
    <property type="entry name" value="Ribosomal_S10"/>
    <property type="match status" value="1"/>
</dbReference>
<dbReference type="PRINTS" id="PR00971">
    <property type="entry name" value="RIBOSOMALS10"/>
</dbReference>
<dbReference type="SMART" id="SM01403">
    <property type="entry name" value="Ribosomal_S10"/>
    <property type="match status" value="1"/>
</dbReference>
<dbReference type="SUPFAM" id="SSF54999">
    <property type="entry name" value="Ribosomal protein S10"/>
    <property type="match status" value="1"/>
</dbReference>
<sequence length="106" mass="12044">MSTAIAQQKIRIRLKAFDRRMLDLSCDKIIETADNTAATAIGPIPLPTKRKIYCVLRSPHVDKDSREHFETRTHRRIIDIYSPSAKTIDALMKLDLPSGVDIEVKL</sequence>
<comment type="function">
    <text evidence="1">Involved in the binding of tRNA to the ribosomes.</text>
</comment>
<comment type="subunit">
    <text evidence="1">Part of the 30S ribosomal subunit.</text>
</comment>
<comment type="similarity">
    <text evidence="1">Belongs to the universal ribosomal protein uS10 family.</text>
</comment>
<reference key="1">
    <citation type="journal article" date="2003" name="Proc. Natl. Acad. Sci. U.S.A.">
        <title>Genome sequence of the cyanobacterium Prochlorococcus marinus SS120, a nearly minimal oxyphototrophic genome.</title>
        <authorList>
            <person name="Dufresne A."/>
            <person name="Salanoubat M."/>
            <person name="Partensky F."/>
            <person name="Artiguenave F."/>
            <person name="Axmann I.M."/>
            <person name="Barbe V."/>
            <person name="Duprat S."/>
            <person name="Galperin M.Y."/>
            <person name="Koonin E.V."/>
            <person name="Le Gall F."/>
            <person name="Makarova K.S."/>
            <person name="Ostrowski M."/>
            <person name="Oztas S."/>
            <person name="Robert C."/>
            <person name="Rogozin I.B."/>
            <person name="Scanlan D.J."/>
            <person name="Tandeau de Marsac N."/>
            <person name="Weissenbach J."/>
            <person name="Wincker P."/>
            <person name="Wolf Y.I."/>
            <person name="Hess W.R."/>
        </authorList>
    </citation>
    <scope>NUCLEOTIDE SEQUENCE [LARGE SCALE GENOMIC DNA]</scope>
    <source>
        <strain>SARG / CCMP1375 / SS120</strain>
    </source>
</reference>
<organism>
    <name type="scientific">Prochlorococcus marinus (strain SARG / CCMP1375 / SS120)</name>
    <dbReference type="NCBI Taxonomy" id="167539"/>
    <lineage>
        <taxon>Bacteria</taxon>
        <taxon>Bacillati</taxon>
        <taxon>Cyanobacteriota</taxon>
        <taxon>Cyanophyceae</taxon>
        <taxon>Synechococcales</taxon>
        <taxon>Prochlorococcaceae</taxon>
        <taxon>Prochlorococcus</taxon>
    </lineage>
</organism>
<accession>Q7VA06</accession>
<protein>
    <recommendedName>
        <fullName evidence="1">Small ribosomal subunit protein uS10</fullName>
    </recommendedName>
    <alternativeName>
        <fullName evidence="2">30S ribosomal protein S10</fullName>
    </alternativeName>
</protein>
<feature type="chain" id="PRO_0000146575" description="Small ribosomal subunit protein uS10">
    <location>
        <begin position="1"/>
        <end position="106"/>
    </location>
</feature>
<gene>
    <name evidence="1" type="primary">rpsJ</name>
    <name evidence="1" type="synonym">rps10</name>
    <name type="ordered locus">Pro_1663</name>
</gene>
<proteinExistence type="inferred from homology"/>
<name>RS10_PROMA</name>
<keyword id="KW-1185">Reference proteome</keyword>
<keyword id="KW-0687">Ribonucleoprotein</keyword>
<keyword id="KW-0689">Ribosomal protein</keyword>
<evidence type="ECO:0000255" key="1">
    <source>
        <dbReference type="HAMAP-Rule" id="MF_00508"/>
    </source>
</evidence>
<evidence type="ECO:0000305" key="2"/>